<proteinExistence type="predicted"/>
<feature type="chain" id="PRO_0000346907" description="Putative uncharacterized protein DDB_G0290589">
    <location>
        <begin position="1"/>
        <end position="63"/>
    </location>
</feature>
<protein>
    <recommendedName>
        <fullName>Putative uncharacterized protein DDB_G0290589</fullName>
    </recommendedName>
</protein>
<name>Y8976_DICDI</name>
<keyword id="KW-1185">Reference proteome</keyword>
<sequence length="63" mass="7028">MSLLNSICSFSGLNRNNNKNAKNINSNIFNNFNNQSTNKIAGSDYMMFESSGNGYRKTRDGVI</sequence>
<gene>
    <name type="ORF">DDB_G0290589</name>
</gene>
<organism>
    <name type="scientific">Dictyostelium discoideum</name>
    <name type="common">Social amoeba</name>
    <dbReference type="NCBI Taxonomy" id="44689"/>
    <lineage>
        <taxon>Eukaryota</taxon>
        <taxon>Amoebozoa</taxon>
        <taxon>Evosea</taxon>
        <taxon>Eumycetozoa</taxon>
        <taxon>Dictyostelia</taxon>
        <taxon>Dictyosteliales</taxon>
        <taxon>Dictyosteliaceae</taxon>
        <taxon>Dictyostelium</taxon>
    </lineage>
</organism>
<dbReference type="EMBL" id="AAFI02000164">
    <property type="protein sequence ID" value="EAL62155.1"/>
    <property type="molecule type" value="Genomic_DNA"/>
</dbReference>
<dbReference type="RefSeq" id="XP_635675.1">
    <property type="nucleotide sequence ID" value="XM_630583.1"/>
</dbReference>
<dbReference type="PaxDb" id="44689-DDB0188976"/>
<dbReference type="EnsemblProtists" id="EAL62155">
    <property type="protein sequence ID" value="EAL62155"/>
    <property type="gene ID" value="DDB_G0290589"/>
</dbReference>
<dbReference type="GeneID" id="8627746"/>
<dbReference type="KEGG" id="ddi:DDB_G0290589"/>
<dbReference type="dictyBase" id="DDB_G0290589"/>
<dbReference type="HOGENOM" id="CLU_2890478_0_0_1"/>
<dbReference type="InParanoid" id="Q54FU2"/>
<dbReference type="PRO" id="PR:Q54FU2"/>
<dbReference type="Proteomes" id="UP000002195">
    <property type="component" value="Chromosome 5"/>
</dbReference>
<accession>Q54FU2</accession>
<reference key="1">
    <citation type="journal article" date="2005" name="Nature">
        <title>The genome of the social amoeba Dictyostelium discoideum.</title>
        <authorList>
            <person name="Eichinger L."/>
            <person name="Pachebat J.A."/>
            <person name="Gloeckner G."/>
            <person name="Rajandream M.A."/>
            <person name="Sucgang R."/>
            <person name="Berriman M."/>
            <person name="Song J."/>
            <person name="Olsen R."/>
            <person name="Szafranski K."/>
            <person name="Xu Q."/>
            <person name="Tunggal B."/>
            <person name="Kummerfeld S."/>
            <person name="Madera M."/>
            <person name="Konfortov B.A."/>
            <person name="Rivero F."/>
            <person name="Bankier A.T."/>
            <person name="Lehmann R."/>
            <person name="Hamlin N."/>
            <person name="Davies R."/>
            <person name="Gaudet P."/>
            <person name="Fey P."/>
            <person name="Pilcher K."/>
            <person name="Chen G."/>
            <person name="Saunders D."/>
            <person name="Sodergren E.J."/>
            <person name="Davis P."/>
            <person name="Kerhornou A."/>
            <person name="Nie X."/>
            <person name="Hall N."/>
            <person name="Anjard C."/>
            <person name="Hemphill L."/>
            <person name="Bason N."/>
            <person name="Farbrother P."/>
            <person name="Desany B."/>
            <person name="Just E."/>
            <person name="Morio T."/>
            <person name="Rost R."/>
            <person name="Churcher C.M."/>
            <person name="Cooper J."/>
            <person name="Haydock S."/>
            <person name="van Driessche N."/>
            <person name="Cronin A."/>
            <person name="Goodhead I."/>
            <person name="Muzny D.M."/>
            <person name="Mourier T."/>
            <person name="Pain A."/>
            <person name="Lu M."/>
            <person name="Harper D."/>
            <person name="Lindsay R."/>
            <person name="Hauser H."/>
            <person name="James K.D."/>
            <person name="Quiles M."/>
            <person name="Madan Babu M."/>
            <person name="Saito T."/>
            <person name="Buchrieser C."/>
            <person name="Wardroper A."/>
            <person name="Felder M."/>
            <person name="Thangavelu M."/>
            <person name="Johnson D."/>
            <person name="Knights A."/>
            <person name="Loulseged H."/>
            <person name="Mungall K.L."/>
            <person name="Oliver K."/>
            <person name="Price C."/>
            <person name="Quail M.A."/>
            <person name="Urushihara H."/>
            <person name="Hernandez J."/>
            <person name="Rabbinowitsch E."/>
            <person name="Steffen D."/>
            <person name="Sanders M."/>
            <person name="Ma J."/>
            <person name="Kohara Y."/>
            <person name="Sharp S."/>
            <person name="Simmonds M.N."/>
            <person name="Spiegler S."/>
            <person name="Tivey A."/>
            <person name="Sugano S."/>
            <person name="White B."/>
            <person name="Walker D."/>
            <person name="Woodward J.R."/>
            <person name="Winckler T."/>
            <person name="Tanaka Y."/>
            <person name="Shaulsky G."/>
            <person name="Schleicher M."/>
            <person name="Weinstock G.M."/>
            <person name="Rosenthal A."/>
            <person name="Cox E.C."/>
            <person name="Chisholm R.L."/>
            <person name="Gibbs R.A."/>
            <person name="Loomis W.F."/>
            <person name="Platzer M."/>
            <person name="Kay R.R."/>
            <person name="Williams J.G."/>
            <person name="Dear P.H."/>
            <person name="Noegel A.A."/>
            <person name="Barrell B.G."/>
            <person name="Kuspa A."/>
        </authorList>
    </citation>
    <scope>NUCLEOTIDE SEQUENCE [LARGE SCALE GENOMIC DNA]</scope>
    <source>
        <strain>AX4</strain>
    </source>
</reference>